<feature type="chain" id="PRO_1000078704" description="Small ribosomal subunit protein bS18">
    <location>
        <begin position="1"/>
        <end position="76"/>
    </location>
</feature>
<reference key="1">
    <citation type="submission" date="2007-06" db="EMBL/GenBank/DDBJ databases">
        <title>Complete sequence of Marinomonas sp. MWYL1.</title>
        <authorList>
            <consortium name="US DOE Joint Genome Institute"/>
            <person name="Copeland A."/>
            <person name="Lucas S."/>
            <person name="Lapidus A."/>
            <person name="Barry K."/>
            <person name="Glavina del Rio T."/>
            <person name="Dalin E."/>
            <person name="Tice H."/>
            <person name="Pitluck S."/>
            <person name="Kiss H."/>
            <person name="Brettin T."/>
            <person name="Bruce D."/>
            <person name="Detter J.C."/>
            <person name="Han C."/>
            <person name="Schmutz J."/>
            <person name="Larimer F."/>
            <person name="Land M."/>
            <person name="Hauser L."/>
            <person name="Kyrpides N."/>
            <person name="Kim E."/>
            <person name="Johnston A.W.B."/>
            <person name="Todd J.D."/>
            <person name="Rogers R."/>
            <person name="Wexler M."/>
            <person name="Bond P.L."/>
            <person name="Li Y."/>
            <person name="Richardson P."/>
        </authorList>
    </citation>
    <scope>NUCLEOTIDE SEQUENCE [LARGE SCALE GENOMIC DNA]</scope>
    <source>
        <strain>MWYL1</strain>
    </source>
</reference>
<protein>
    <recommendedName>
        <fullName evidence="1">Small ribosomal subunit protein bS18</fullName>
    </recommendedName>
    <alternativeName>
        <fullName evidence="2">30S ribosomal protein S18</fullName>
    </alternativeName>
</protein>
<sequence length="76" mass="8964">MARFFRRRKFCRFTAEGVKEIDYKDLDTLKGYITETGKIVPSRITGTKARYQRQLATAIKRARYIAILPYTDSHFN</sequence>
<comment type="function">
    <text evidence="1">Binds as a heterodimer with protein bS6 to the central domain of the 16S rRNA, where it helps stabilize the platform of the 30S subunit.</text>
</comment>
<comment type="subunit">
    <text evidence="1">Part of the 30S ribosomal subunit. Forms a tight heterodimer with protein bS6.</text>
</comment>
<comment type="similarity">
    <text evidence="1">Belongs to the bacterial ribosomal protein bS18 family.</text>
</comment>
<proteinExistence type="inferred from homology"/>
<evidence type="ECO:0000255" key="1">
    <source>
        <dbReference type="HAMAP-Rule" id="MF_00270"/>
    </source>
</evidence>
<evidence type="ECO:0000305" key="2"/>
<organism>
    <name type="scientific">Marinomonas sp. (strain MWYL1)</name>
    <dbReference type="NCBI Taxonomy" id="400668"/>
    <lineage>
        <taxon>Bacteria</taxon>
        <taxon>Pseudomonadati</taxon>
        <taxon>Pseudomonadota</taxon>
        <taxon>Gammaproteobacteria</taxon>
        <taxon>Oceanospirillales</taxon>
        <taxon>Oceanospirillaceae</taxon>
        <taxon>Marinomonas</taxon>
    </lineage>
</organism>
<dbReference type="EMBL" id="CP000749">
    <property type="protein sequence ID" value="ABR72367.1"/>
    <property type="molecule type" value="Genomic_DNA"/>
</dbReference>
<dbReference type="SMR" id="A6W0Y8"/>
<dbReference type="STRING" id="400668.Mmwyl1_3464"/>
<dbReference type="KEGG" id="mmw:Mmwyl1_3464"/>
<dbReference type="eggNOG" id="COG0238">
    <property type="taxonomic scope" value="Bacteria"/>
</dbReference>
<dbReference type="HOGENOM" id="CLU_148710_2_3_6"/>
<dbReference type="OrthoDB" id="9812008at2"/>
<dbReference type="GO" id="GO:0022627">
    <property type="term" value="C:cytosolic small ribosomal subunit"/>
    <property type="evidence" value="ECO:0007669"/>
    <property type="project" value="TreeGrafter"/>
</dbReference>
<dbReference type="GO" id="GO:0070181">
    <property type="term" value="F:small ribosomal subunit rRNA binding"/>
    <property type="evidence" value="ECO:0007669"/>
    <property type="project" value="TreeGrafter"/>
</dbReference>
<dbReference type="GO" id="GO:0003735">
    <property type="term" value="F:structural constituent of ribosome"/>
    <property type="evidence" value="ECO:0007669"/>
    <property type="project" value="InterPro"/>
</dbReference>
<dbReference type="GO" id="GO:0006412">
    <property type="term" value="P:translation"/>
    <property type="evidence" value="ECO:0007669"/>
    <property type="project" value="UniProtKB-UniRule"/>
</dbReference>
<dbReference type="FunFam" id="4.10.640.10:FF:000001">
    <property type="entry name" value="30S ribosomal protein S18"/>
    <property type="match status" value="1"/>
</dbReference>
<dbReference type="Gene3D" id="4.10.640.10">
    <property type="entry name" value="Ribosomal protein S18"/>
    <property type="match status" value="1"/>
</dbReference>
<dbReference type="HAMAP" id="MF_00270">
    <property type="entry name" value="Ribosomal_bS18"/>
    <property type="match status" value="1"/>
</dbReference>
<dbReference type="InterPro" id="IPR001648">
    <property type="entry name" value="Ribosomal_bS18"/>
</dbReference>
<dbReference type="InterPro" id="IPR018275">
    <property type="entry name" value="Ribosomal_bS18_CS"/>
</dbReference>
<dbReference type="InterPro" id="IPR036870">
    <property type="entry name" value="Ribosomal_bS18_sf"/>
</dbReference>
<dbReference type="NCBIfam" id="TIGR00165">
    <property type="entry name" value="S18"/>
    <property type="match status" value="1"/>
</dbReference>
<dbReference type="PANTHER" id="PTHR13479">
    <property type="entry name" value="30S RIBOSOMAL PROTEIN S18"/>
    <property type="match status" value="1"/>
</dbReference>
<dbReference type="PANTHER" id="PTHR13479:SF40">
    <property type="entry name" value="SMALL RIBOSOMAL SUBUNIT PROTEIN BS18M"/>
    <property type="match status" value="1"/>
</dbReference>
<dbReference type="Pfam" id="PF01084">
    <property type="entry name" value="Ribosomal_S18"/>
    <property type="match status" value="1"/>
</dbReference>
<dbReference type="PRINTS" id="PR00974">
    <property type="entry name" value="RIBOSOMALS18"/>
</dbReference>
<dbReference type="SUPFAM" id="SSF46911">
    <property type="entry name" value="Ribosomal protein S18"/>
    <property type="match status" value="1"/>
</dbReference>
<dbReference type="PROSITE" id="PS00057">
    <property type="entry name" value="RIBOSOMAL_S18"/>
    <property type="match status" value="1"/>
</dbReference>
<keyword id="KW-0687">Ribonucleoprotein</keyword>
<keyword id="KW-0689">Ribosomal protein</keyword>
<keyword id="KW-0694">RNA-binding</keyword>
<keyword id="KW-0699">rRNA-binding</keyword>
<accession>A6W0Y8</accession>
<name>RS18_MARMS</name>
<gene>
    <name evidence="1" type="primary">rpsR</name>
    <name type="ordered locus">Mmwyl1_3464</name>
</gene>